<gene>
    <name type="ordered locus">At3g25750</name>
    <name type="ORF">K13N2.9</name>
</gene>
<reference key="1">
    <citation type="journal article" date="2000" name="DNA Res.">
        <title>Structural analysis of Arabidopsis thaliana chromosome 3. I. Sequence features of the regions of 4,504,864 bp covered by sixty P1 and TAC clones.</title>
        <authorList>
            <person name="Sato S."/>
            <person name="Nakamura Y."/>
            <person name="Kaneko T."/>
            <person name="Katoh T."/>
            <person name="Asamizu E."/>
            <person name="Tabata S."/>
        </authorList>
    </citation>
    <scope>NUCLEOTIDE SEQUENCE [LARGE SCALE GENOMIC DNA]</scope>
    <source>
        <strain>cv. Columbia</strain>
    </source>
</reference>
<reference key="2">
    <citation type="journal article" date="2017" name="Plant J.">
        <title>Araport11: a complete reannotation of the Arabidopsis thaliana reference genome.</title>
        <authorList>
            <person name="Cheng C.Y."/>
            <person name="Krishnakumar V."/>
            <person name="Chan A.P."/>
            <person name="Thibaud-Nissen F."/>
            <person name="Schobel S."/>
            <person name="Town C.D."/>
        </authorList>
    </citation>
    <scope>GENOME REANNOTATION</scope>
    <source>
        <strain>cv. Columbia</strain>
    </source>
</reference>
<name>FB187_ARATH</name>
<dbReference type="EMBL" id="AB028607">
    <property type="protein sequence ID" value="BAA95762.1"/>
    <property type="status" value="ALT_SEQ"/>
    <property type="molecule type" value="Genomic_DNA"/>
</dbReference>
<dbReference type="EMBL" id="CP002686">
    <property type="protein sequence ID" value="AEE77064.1"/>
    <property type="status" value="ALT_SEQ"/>
    <property type="molecule type" value="Genomic_DNA"/>
</dbReference>
<dbReference type="EMBL" id="CP002686">
    <property type="protein sequence ID" value="ANM63366.1"/>
    <property type="molecule type" value="Genomic_DNA"/>
</dbReference>
<dbReference type="RefSeq" id="NP_001325458.1">
    <property type="nucleotide sequence ID" value="NM_001338765.1"/>
</dbReference>
<dbReference type="RefSeq" id="NP_189203.1">
    <property type="nucleotide sequence ID" value="NM_113474.1"/>
</dbReference>
<dbReference type="STRING" id="3702.Q9LS04"/>
<dbReference type="PaxDb" id="3702-AT3G25750.1"/>
<dbReference type="EnsemblPlants" id="AT3G25750.2">
    <property type="protein sequence ID" value="AT3G25750.2"/>
    <property type="gene ID" value="AT3G25750"/>
</dbReference>
<dbReference type="GeneID" id="822166"/>
<dbReference type="Gramene" id="AT3G25750.2">
    <property type="protein sequence ID" value="AT3G25750.2"/>
    <property type="gene ID" value="AT3G25750"/>
</dbReference>
<dbReference type="KEGG" id="ath:AT3G25750"/>
<dbReference type="Araport" id="AT3G25750"/>
<dbReference type="TAIR" id="AT3G25750">
    <property type="gene designation" value="ATFDA17"/>
</dbReference>
<dbReference type="eggNOG" id="ENOG502SNC9">
    <property type="taxonomic scope" value="Eukaryota"/>
</dbReference>
<dbReference type="HOGENOM" id="CLU_019286_1_0_1"/>
<dbReference type="InParanoid" id="Q9LS04"/>
<dbReference type="OMA" id="INDERYY"/>
<dbReference type="PRO" id="PR:Q9LS04"/>
<dbReference type="Proteomes" id="UP000006548">
    <property type="component" value="Chromosome 3"/>
</dbReference>
<dbReference type="ExpressionAtlas" id="Q9LS04">
    <property type="expression patterns" value="baseline and differential"/>
</dbReference>
<dbReference type="Gene3D" id="1.20.1280.50">
    <property type="match status" value="1"/>
</dbReference>
<dbReference type="InterPro" id="IPR036047">
    <property type="entry name" value="F-box-like_dom_sf"/>
</dbReference>
<dbReference type="InterPro" id="IPR001810">
    <property type="entry name" value="F-box_dom"/>
</dbReference>
<dbReference type="InterPro" id="IPR005174">
    <property type="entry name" value="KIB1-4_b-propeller"/>
</dbReference>
<dbReference type="InterPro" id="IPR051304">
    <property type="entry name" value="SCF_F-box_domain"/>
</dbReference>
<dbReference type="PANTHER" id="PTHR47123:SF25">
    <property type="entry name" value="F-BOX PROTEIN"/>
    <property type="match status" value="1"/>
</dbReference>
<dbReference type="PANTHER" id="PTHR47123">
    <property type="entry name" value="F-BOX PROTEIN SKIP23"/>
    <property type="match status" value="1"/>
</dbReference>
<dbReference type="Pfam" id="PF03478">
    <property type="entry name" value="Beta-prop_KIB1-4"/>
    <property type="match status" value="1"/>
</dbReference>
<dbReference type="Pfam" id="PF00646">
    <property type="entry name" value="F-box"/>
    <property type="match status" value="1"/>
</dbReference>
<dbReference type="SMART" id="SM00256">
    <property type="entry name" value="FBOX"/>
    <property type="match status" value="1"/>
</dbReference>
<dbReference type="SUPFAM" id="SSF81383">
    <property type="entry name" value="F-box domain"/>
    <property type="match status" value="1"/>
</dbReference>
<protein>
    <recommendedName>
        <fullName>Putative F-box protein At3g25750</fullName>
    </recommendedName>
</protein>
<proteinExistence type="predicted"/>
<feature type="chain" id="PRO_0000283457" description="Putative F-box protein At3g25750">
    <location>
        <begin position="1"/>
        <end position="362"/>
    </location>
</feature>
<feature type="domain" description="F-box">
    <location>
        <begin position="4"/>
        <end position="52"/>
    </location>
</feature>
<organism>
    <name type="scientific">Arabidopsis thaliana</name>
    <name type="common">Mouse-ear cress</name>
    <dbReference type="NCBI Taxonomy" id="3702"/>
    <lineage>
        <taxon>Eukaryota</taxon>
        <taxon>Viridiplantae</taxon>
        <taxon>Streptophyta</taxon>
        <taxon>Embryophyta</taxon>
        <taxon>Tracheophyta</taxon>
        <taxon>Spermatophyta</taxon>
        <taxon>Magnoliopsida</taxon>
        <taxon>eudicotyledons</taxon>
        <taxon>Gunneridae</taxon>
        <taxon>Pentapetalae</taxon>
        <taxon>rosids</taxon>
        <taxon>malvids</taxon>
        <taxon>Brassicales</taxon>
        <taxon>Brassicaceae</taxon>
        <taxon>Camelineae</taxon>
        <taxon>Arabidopsis</taxon>
    </lineage>
</organism>
<comment type="sequence caution" evidence="1">
    <conflict type="erroneous gene model prediction">
        <sequence resource="EMBL-CDS" id="AEE77064"/>
    </conflict>
</comment>
<comment type="sequence caution" evidence="1">
    <conflict type="erroneous gene model prediction">
        <sequence resource="EMBL-CDS" id="BAA95762"/>
    </conflict>
</comment>
<accession>Q9LS04</accession>
<accession>F4JA53</accession>
<sequence>MEKTEWSDLPEELLDLIANRYSSNIDVLRIRSTCKSWRSAVAMSKERLQFRFERYLPTSNKKIKAHLSPTTFFRITLPSSCPNKGWLVRTRQASKMYRKITLLCPLSGERITRSHQTLDLLKVGVSEIRQSYEIQIFDGLKDEKIPLDSEIFSNYIKNSDKIPSVNYHDNKIWCCKTREGSRSWTKIKNQVEDFSDIILHMGRIYAVDLKGAIWWISLSQLTIVQQTSSTPLDYYKYDSCQDTRLVEYCGDLCIVHELSITRNHIQRTVGFKVYKMDEDLAKWVEVSCLGDNTLIVACNSCFTVVASEYHGCLKNSIYFSYYDVKKAENIKVFKLDDGSITQRTDISSQSCFHMFSLPFLNY</sequence>
<keyword id="KW-1185">Reference proteome</keyword>
<evidence type="ECO:0000305" key="1"/>